<feature type="signal peptide" evidence="2">
    <location>
        <begin position="1"/>
        <end position="18"/>
    </location>
</feature>
<feature type="chain" id="PRO_0000407203" description="Extracellular metalloprotease NCU07200">
    <location>
        <begin position="19"/>
        <end position="285"/>
    </location>
</feature>
<feature type="active site" evidence="3">
    <location>
        <position position="198"/>
    </location>
</feature>
<feature type="binding site" evidence="3">
    <location>
        <position position="197"/>
    </location>
    <ligand>
        <name>Zn(2+)</name>
        <dbReference type="ChEBI" id="CHEBI:29105"/>
        <note>catalytic</note>
    </ligand>
</feature>
<feature type="binding site" evidence="3">
    <location>
        <position position="201"/>
    </location>
    <ligand>
        <name>Zn(2+)</name>
        <dbReference type="ChEBI" id="CHEBI:29105"/>
        <note>catalytic</note>
    </ligand>
</feature>
<feature type="glycosylation site" description="N-linked (GlcNAc...) asparagine" evidence="2">
    <location>
        <position position="282"/>
    </location>
</feature>
<feature type="disulfide bond" evidence="1">
    <location>
        <begin position="233"/>
        <end position="260"/>
    </location>
</feature>
<proteinExistence type="inferred from homology"/>
<accession>Q871C5</accession>
<keyword id="KW-1015">Disulfide bond</keyword>
<keyword id="KW-0325">Glycoprotein</keyword>
<keyword id="KW-0378">Hydrolase</keyword>
<keyword id="KW-0479">Metal-binding</keyword>
<keyword id="KW-0482">Metalloprotease</keyword>
<keyword id="KW-0645">Protease</keyword>
<keyword id="KW-1185">Reference proteome</keyword>
<keyword id="KW-0964">Secreted</keyword>
<keyword id="KW-0732">Signal</keyword>
<keyword id="KW-0862">Zinc</keyword>
<name>MEP1_NEUCR</name>
<dbReference type="EC" id="3.4.24.-"/>
<dbReference type="EMBL" id="BX294027">
    <property type="protein sequence ID" value="CAD71082.1"/>
    <property type="molecule type" value="Genomic_DNA"/>
</dbReference>
<dbReference type="EMBL" id="CM002240">
    <property type="protein sequence ID" value="EAA28189.1"/>
    <property type="molecule type" value="Genomic_DNA"/>
</dbReference>
<dbReference type="RefSeq" id="XP_957425.1">
    <property type="nucleotide sequence ID" value="XM_952332.3"/>
</dbReference>
<dbReference type="SMR" id="Q871C5"/>
<dbReference type="STRING" id="367110.Q871C5"/>
<dbReference type="MEROPS" id="M43.008"/>
<dbReference type="PaxDb" id="5141-EFNCRP00000007218"/>
<dbReference type="EnsemblFungi" id="EAA28189">
    <property type="protein sequence ID" value="EAA28189"/>
    <property type="gene ID" value="NCU07200"/>
</dbReference>
<dbReference type="GeneID" id="3873568"/>
<dbReference type="KEGG" id="ncr:NCU07200"/>
<dbReference type="VEuPathDB" id="FungiDB:NCU07200"/>
<dbReference type="HOGENOM" id="CLU_048726_0_0_1"/>
<dbReference type="InParanoid" id="Q871C5"/>
<dbReference type="OMA" id="WGTNDAM"/>
<dbReference type="OrthoDB" id="536211at2759"/>
<dbReference type="Proteomes" id="UP000001805">
    <property type="component" value="Chromosome 2, Linkage Group V"/>
</dbReference>
<dbReference type="GO" id="GO:0005576">
    <property type="term" value="C:extracellular region"/>
    <property type="evidence" value="ECO:0007669"/>
    <property type="project" value="UniProtKB-SubCell"/>
</dbReference>
<dbReference type="GO" id="GO:0046872">
    <property type="term" value="F:metal ion binding"/>
    <property type="evidence" value="ECO:0007669"/>
    <property type="project" value="UniProtKB-KW"/>
</dbReference>
<dbReference type="GO" id="GO:0008237">
    <property type="term" value="F:metallopeptidase activity"/>
    <property type="evidence" value="ECO:0007669"/>
    <property type="project" value="UniProtKB-KW"/>
</dbReference>
<dbReference type="GO" id="GO:0006508">
    <property type="term" value="P:proteolysis"/>
    <property type="evidence" value="ECO:0007669"/>
    <property type="project" value="UniProtKB-KW"/>
</dbReference>
<dbReference type="CDD" id="cd04275">
    <property type="entry name" value="ZnMc_pappalysin_like"/>
    <property type="match status" value="1"/>
</dbReference>
<dbReference type="Gene3D" id="3.40.390.10">
    <property type="entry name" value="Collagenase (Catalytic Domain)"/>
    <property type="match status" value="1"/>
</dbReference>
<dbReference type="InterPro" id="IPR024079">
    <property type="entry name" value="MetalloPept_cat_dom_sf"/>
</dbReference>
<dbReference type="InterPro" id="IPR008754">
    <property type="entry name" value="Peptidase_M43"/>
</dbReference>
<dbReference type="PANTHER" id="PTHR47466">
    <property type="match status" value="1"/>
</dbReference>
<dbReference type="PANTHER" id="PTHR47466:SF1">
    <property type="entry name" value="METALLOPROTEASE MEP1 (AFU_ORTHOLOGUE AFUA_1G07730)-RELATED"/>
    <property type="match status" value="1"/>
</dbReference>
<dbReference type="Pfam" id="PF05572">
    <property type="entry name" value="Peptidase_M43"/>
    <property type="match status" value="1"/>
</dbReference>
<dbReference type="SUPFAM" id="SSF55486">
    <property type="entry name" value="Metalloproteases ('zincins'), catalytic domain"/>
    <property type="match status" value="1"/>
</dbReference>
<dbReference type="PROSITE" id="PS00142">
    <property type="entry name" value="ZINC_PROTEASE"/>
    <property type="match status" value="1"/>
</dbReference>
<reference key="1">
    <citation type="journal article" date="2003" name="Nucleic Acids Res.">
        <title>What's in the genome of a filamentous fungus? Analysis of the Neurospora genome sequence.</title>
        <authorList>
            <person name="Mannhaupt G."/>
            <person name="Montrone C."/>
            <person name="Haase D."/>
            <person name="Mewes H.-W."/>
            <person name="Aign V."/>
            <person name="Hoheisel J.D."/>
            <person name="Fartmann B."/>
            <person name="Nyakatura G."/>
            <person name="Kempken F."/>
            <person name="Maier J."/>
            <person name="Schulte U."/>
        </authorList>
    </citation>
    <scope>NUCLEOTIDE SEQUENCE [LARGE SCALE GENOMIC DNA]</scope>
    <source>
        <strain>ATCC 24698 / 74-OR23-1A / CBS 708.71 / DSM 1257 / FGSC 987</strain>
    </source>
</reference>
<reference key="2">
    <citation type="journal article" date="2003" name="Nature">
        <title>The genome sequence of the filamentous fungus Neurospora crassa.</title>
        <authorList>
            <person name="Galagan J.E."/>
            <person name="Calvo S.E."/>
            <person name="Borkovich K.A."/>
            <person name="Selker E.U."/>
            <person name="Read N.D."/>
            <person name="Jaffe D.B."/>
            <person name="FitzHugh W."/>
            <person name="Ma L.-J."/>
            <person name="Smirnov S."/>
            <person name="Purcell S."/>
            <person name="Rehman B."/>
            <person name="Elkins T."/>
            <person name="Engels R."/>
            <person name="Wang S."/>
            <person name="Nielsen C.B."/>
            <person name="Butler J."/>
            <person name="Endrizzi M."/>
            <person name="Qui D."/>
            <person name="Ianakiev P."/>
            <person name="Bell-Pedersen D."/>
            <person name="Nelson M.A."/>
            <person name="Werner-Washburne M."/>
            <person name="Selitrennikoff C.P."/>
            <person name="Kinsey J.A."/>
            <person name="Braun E.L."/>
            <person name="Zelter A."/>
            <person name="Schulte U."/>
            <person name="Kothe G.O."/>
            <person name="Jedd G."/>
            <person name="Mewes H.-W."/>
            <person name="Staben C."/>
            <person name="Marcotte E."/>
            <person name="Greenberg D."/>
            <person name="Roy A."/>
            <person name="Foley K."/>
            <person name="Naylor J."/>
            <person name="Stange-Thomann N."/>
            <person name="Barrett R."/>
            <person name="Gnerre S."/>
            <person name="Kamal M."/>
            <person name="Kamvysselis M."/>
            <person name="Mauceli E.W."/>
            <person name="Bielke C."/>
            <person name="Rudd S."/>
            <person name="Frishman D."/>
            <person name="Krystofova S."/>
            <person name="Rasmussen C."/>
            <person name="Metzenberg R.L."/>
            <person name="Perkins D.D."/>
            <person name="Kroken S."/>
            <person name="Cogoni C."/>
            <person name="Macino G."/>
            <person name="Catcheside D.E.A."/>
            <person name="Li W."/>
            <person name="Pratt R.J."/>
            <person name="Osmani S.A."/>
            <person name="DeSouza C.P.C."/>
            <person name="Glass N.L."/>
            <person name="Orbach M.J."/>
            <person name="Berglund J.A."/>
            <person name="Voelker R."/>
            <person name="Yarden O."/>
            <person name="Plamann M."/>
            <person name="Seiler S."/>
            <person name="Dunlap J.C."/>
            <person name="Radford A."/>
            <person name="Aramayo R."/>
            <person name="Natvig D.O."/>
            <person name="Alex L.A."/>
            <person name="Mannhaupt G."/>
            <person name="Ebbole D.J."/>
            <person name="Freitag M."/>
            <person name="Paulsen I."/>
            <person name="Sachs M.S."/>
            <person name="Lander E.S."/>
            <person name="Nusbaum C."/>
            <person name="Birren B.W."/>
        </authorList>
    </citation>
    <scope>NUCLEOTIDE SEQUENCE [LARGE SCALE GENOMIC DNA]</scope>
    <source>
        <strain>ATCC 24698 / 74-OR23-1A / CBS 708.71 / DSM 1257 / FGSC 987</strain>
    </source>
</reference>
<comment type="function">
    <text evidence="1">Secreted metalloproteinase that allows assimilation of proteinaceous substrates.</text>
</comment>
<comment type="subcellular location">
    <subcellularLocation>
        <location evidence="1">Secreted</location>
    </subcellularLocation>
</comment>
<comment type="similarity">
    <text evidence="4">Belongs to the peptidase M43B family.</text>
</comment>
<sequence>MQIKSFLLAAAAAPAALGAAVNTIKPFNCGTDAPSRQHIQMTKELAEKEAAMAAEGIMTAQATINVNVYFHVVAASTALSDGYVTSTMINNQVATLNKAYAPHNIQFTLKGTDYTINSNWAVDGSELAMKKALRKGTYKDLNLYILKDLGDALGYCYFPTSVTSKSNDWYYDGCSILYDTLPGGSLTNYNLGHTSTHEIGHWFGLYHTFQGGCSGNGDYVSDTPAQASASSGCPTGRDSCPSQPGLDPIHNYMDYSYDTCYEEFTSGQRTRMTSYWNQYRANASV</sequence>
<organism>
    <name type="scientific">Neurospora crassa (strain ATCC 24698 / 74-OR23-1A / CBS 708.71 / DSM 1257 / FGSC 987)</name>
    <dbReference type="NCBI Taxonomy" id="367110"/>
    <lineage>
        <taxon>Eukaryota</taxon>
        <taxon>Fungi</taxon>
        <taxon>Dikarya</taxon>
        <taxon>Ascomycota</taxon>
        <taxon>Pezizomycotina</taxon>
        <taxon>Sordariomycetes</taxon>
        <taxon>Sordariomycetidae</taxon>
        <taxon>Sordariales</taxon>
        <taxon>Sordariaceae</taxon>
        <taxon>Neurospora</taxon>
    </lineage>
</organism>
<protein>
    <recommendedName>
        <fullName>Extracellular metalloprotease NCU07200</fullName>
        <ecNumber>3.4.24.-</ecNumber>
    </recommendedName>
</protein>
<gene>
    <name type="ORF">B8G12.220</name>
    <name type="ORF">NCU07200</name>
</gene>
<evidence type="ECO:0000250" key="1"/>
<evidence type="ECO:0000255" key="2"/>
<evidence type="ECO:0000255" key="3">
    <source>
        <dbReference type="PROSITE-ProRule" id="PRU10095"/>
    </source>
</evidence>
<evidence type="ECO:0000305" key="4"/>